<comment type="function">
    <text evidence="1">This protein specifically catalyzes the removal of signal peptides from prolipoproteins.</text>
</comment>
<comment type="catalytic activity">
    <reaction evidence="1">
        <text>Release of signal peptides from bacterial membrane prolipoproteins. Hydrolyzes -Xaa-Yaa-Zaa-|-(S,diacylglyceryl)Cys-, in which Xaa is hydrophobic (preferably Leu), and Yaa (Ala or Ser) and Zaa (Gly or Ala) have small, neutral side chains.</text>
        <dbReference type="EC" id="3.4.23.36"/>
    </reaction>
</comment>
<comment type="pathway">
    <text evidence="1">Protein modification; lipoprotein biosynthesis (signal peptide cleavage).</text>
</comment>
<comment type="subcellular location">
    <subcellularLocation>
        <location evidence="1">Cell inner membrane</location>
        <topology evidence="1">Multi-pass membrane protein</topology>
    </subcellularLocation>
</comment>
<comment type="similarity">
    <text evidence="1">Belongs to the peptidase A8 family.</text>
</comment>
<reference key="1">
    <citation type="journal article" date="2011" name="MBio">
        <title>Novel metabolic attributes of the genus Cyanothece, comprising a group of unicellular nitrogen-fixing Cyanobacteria.</title>
        <authorList>
            <person name="Bandyopadhyay A."/>
            <person name="Elvitigala T."/>
            <person name="Welsh E."/>
            <person name="Stockel J."/>
            <person name="Liberton M."/>
            <person name="Min H."/>
            <person name="Sherman L.A."/>
            <person name="Pakrasi H.B."/>
        </authorList>
    </citation>
    <scope>NUCLEOTIDE SEQUENCE [LARGE SCALE GENOMIC DNA]</scope>
    <source>
        <strain>PCC 7424</strain>
    </source>
</reference>
<dbReference type="EC" id="3.4.23.36" evidence="1"/>
<dbReference type="EMBL" id="CP001291">
    <property type="protein sequence ID" value="ACK73326.1"/>
    <property type="molecule type" value="Genomic_DNA"/>
</dbReference>
<dbReference type="RefSeq" id="WP_015956907.1">
    <property type="nucleotide sequence ID" value="NC_011729.1"/>
</dbReference>
<dbReference type="SMR" id="B7KFK1"/>
<dbReference type="STRING" id="65393.PCC7424_4973"/>
<dbReference type="KEGG" id="cyc:PCC7424_4973"/>
<dbReference type="eggNOG" id="COG0597">
    <property type="taxonomic scope" value="Bacteria"/>
</dbReference>
<dbReference type="HOGENOM" id="CLU_083252_3_2_3"/>
<dbReference type="UniPathway" id="UPA00665"/>
<dbReference type="Proteomes" id="UP000002384">
    <property type="component" value="Chromosome"/>
</dbReference>
<dbReference type="GO" id="GO:0005886">
    <property type="term" value="C:plasma membrane"/>
    <property type="evidence" value="ECO:0007669"/>
    <property type="project" value="UniProtKB-SubCell"/>
</dbReference>
<dbReference type="GO" id="GO:0004190">
    <property type="term" value="F:aspartic-type endopeptidase activity"/>
    <property type="evidence" value="ECO:0007669"/>
    <property type="project" value="UniProtKB-UniRule"/>
</dbReference>
<dbReference type="GO" id="GO:0006508">
    <property type="term" value="P:proteolysis"/>
    <property type="evidence" value="ECO:0007669"/>
    <property type="project" value="UniProtKB-KW"/>
</dbReference>
<dbReference type="HAMAP" id="MF_00161">
    <property type="entry name" value="LspA"/>
    <property type="match status" value="1"/>
</dbReference>
<dbReference type="InterPro" id="IPR001872">
    <property type="entry name" value="Peptidase_A8"/>
</dbReference>
<dbReference type="NCBIfam" id="TIGR00077">
    <property type="entry name" value="lspA"/>
    <property type="match status" value="1"/>
</dbReference>
<dbReference type="PANTHER" id="PTHR33695">
    <property type="entry name" value="LIPOPROTEIN SIGNAL PEPTIDASE"/>
    <property type="match status" value="1"/>
</dbReference>
<dbReference type="PANTHER" id="PTHR33695:SF1">
    <property type="entry name" value="LIPOPROTEIN SIGNAL PEPTIDASE"/>
    <property type="match status" value="1"/>
</dbReference>
<dbReference type="Pfam" id="PF01252">
    <property type="entry name" value="Peptidase_A8"/>
    <property type="match status" value="1"/>
</dbReference>
<dbReference type="PRINTS" id="PR00781">
    <property type="entry name" value="LIPOSIGPTASE"/>
</dbReference>
<dbReference type="PROSITE" id="PS00855">
    <property type="entry name" value="SPASE_II"/>
    <property type="match status" value="1"/>
</dbReference>
<evidence type="ECO:0000255" key="1">
    <source>
        <dbReference type="HAMAP-Rule" id="MF_00161"/>
    </source>
</evidence>
<name>LSPA_GLOC7</name>
<gene>
    <name evidence="1" type="primary">lspA</name>
    <name type="ordered locus">PCC7424_4973</name>
</gene>
<protein>
    <recommendedName>
        <fullName evidence="1">Lipoprotein signal peptidase</fullName>
        <ecNumber evidence="1">3.4.23.36</ecNumber>
    </recommendedName>
    <alternativeName>
        <fullName evidence="1">Prolipoprotein signal peptidase</fullName>
    </alternativeName>
    <alternativeName>
        <fullName evidence="1">Signal peptidase II</fullName>
        <shortName evidence="1">SPase II</shortName>
    </alternativeName>
</protein>
<proteinExistence type="inferred from homology"/>
<sequence>MMKKNRWFWLVAIIGLGLDQLTKYITVQSFETIGDTFGLWPGVFHLTYVINTGAAFSFFKGGAVWLRWLSLAVSLGLIFLGWYAPRMRIVEQLGYGFILAGALGNGIDRFLFGYVVDFLDFRLINFPVFNLADTFINIGIFFLLLASFPPKSSSQKNTSQ</sequence>
<feature type="chain" id="PRO_1000190797" description="Lipoprotein signal peptidase">
    <location>
        <begin position="1"/>
        <end position="160"/>
    </location>
</feature>
<feature type="transmembrane region" description="Helical" evidence="1">
    <location>
        <begin position="7"/>
        <end position="27"/>
    </location>
</feature>
<feature type="transmembrane region" description="Helical" evidence="1">
    <location>
        <begin position="39"/>
        <end position="59"/>
    </location>
</feature>
<feature type="transmembrane region" description="Helical" evidence="1">
    <location>
        <begin position="62"/>
        <end position="82"/>
    </location>
</feature>
<feature type="transmembrane region" description="Helical" evidence="1">
    <location>
        <begin position="96"/>
        <end position="116"/>
    </location>
</feature>
<feature type="transmembrane region" description="Helical" evidence="1">
    <location>
        <begin position="126"/>
        <end position="146"/>
    </location>
</feature>
<feature type="active site" evidence="1">
    <location>
        <position position="117"/>
    </location>
</feature>
<feature type="active site" evidence="1">
    <location>
        <position position="133"/>
    </location>
</feature>
<accession>B7KFK1</accession>
<organism>
    <name type="scientific">Gloeothece citriformis (strain PCC 7424)</name>
    <name type="common">Cyanothece sp. (strain PCC 7424)</name>
    <dbReference type="NCBI Taxonomy" id="65393"/>
    <lineage>
        <taxon>Bacteria</taxon>
        <taxon>Bacillati</taxon>
        <taxon>Cyanobacteriota</taxon>
        <taxon>Cyanophyceae</taxon>
        <taxon>Oscillatoriophycideae</taxon>
        <taxon>Chroococcales</taxon>
        <taxon>Aphanothecaceae</taxon>
        <taxon>Gloeothece</taxon>
        <taxon>Gloeothece citriformis</taxon>
    </lineage>
</organism>
<keyword id="KW-0064">Aspartyl protease</keyword>
<keyword id="KW-0997">Cell inner membrane</keyword>
<keyword id="KW-1003">Cell membrane</keyword>
<keyword id="KW-0378">Hydrolase</keyword>
<keyword id="KW-0472">Membrane</keyword>
<keyword id="KW-0645">Protease</keyword>
<keyword id="KW-1185">Reference proteome</keyword>
<keyword id="KW-0812">Transmembrane</keyword>
<keyword id="KW-1133">Transmembrane helix</keyword>